<proteinExistence type="inferred from homology"/>
<keyword id="KW-0997">Cell inner membrane</keyword>
<keyword id="KW-1003">Cell membrane</keyword>
<keyword id="KW-0406">Ion transport</keyword>
<keyword id="KW-0408">Iron</keyword>
<keyword id="KW-0410">Iron transport</keyword>
<keyword id="KW-0472">Membrane</keyword>
<keyword id="KW-0479">Metal-binding</keyword>
<keyword id="KW-1185">Reference proteome</keyword>
<keyword id="KW-0812">Transmembrane</keyword>
<keyword id="KW-1133">Transmembrane helix</keyword>
<keyword id="KW-0813">Transport</keyword>
<keyword id="KW-0862">Zinc</keyword>
<keyword id="KW-0864">Zinc transport</keyword>
<sequence length="300" mass="33037">MNQTYGRLVSRAAIAATAMALALLLIKIFAWWYTGSVSILAALVDSLVDIAASLTNLLVVRYSLQPADDEHTFGHGKAESLAALAQSMFISGSALFLFLTSIQNLIKPTPMNDPGVGIGVTVIALICTIILVTFQRWVVRKTQSQAVRADMLHYQSDVMMNGAILIALGLSWYGWHRADALFALGIGIYILYSALRMGYEAVQSLLDRALPDAERQEIIDIVTSWPGVSGAHDLRTRQSGPTRFIQIHLEMEDNLPLVQAHLVAEQVEQAILRRFPGSDVIIHQDPCSVVPREIKKFELV</sequence>
<feature type="chain" id="PRO_1000087421" description="Cation-efflux pump FieF">
    <location>
        <begin position="1"/>
        <end position="300"/>
    </location>
</feature>
<feature type="transmembrane region" description="Helical" evidence="1">
    <location>
        <begin position="12"/>
        <end position="32"/>
    </location>
</feature>
<feature type="transmembrane region" description="Helical" evidence="1">
    <location>
        <begin position="39"/>
        <end position="59"/>
    </location>
</feature>
<feature type="transmembrane region" description="Helical" evidence="1">
    <location>
        <begin position="82"/>
        <end position="102"/>
    </location>
</feature>
<feature type="transmembrane region" description="Helical" evidence="1">
    <location>
        <begin position="114"/>
        <end position="134"/>
    </location>
</feature>
<feature type="transmembrane region" description="Helical" evidence="1">
    <location>
        <begin position="156"/>
        <end position="176"/>
    </location>
</feature>
<feature type="transmembrane region" description="Helical" evidence="1">
    <location>
        <begin position="178"/>
        <end position="198"/>
    </location>
</feature>
<feature type="binding site" evidence="1">
    <location>
        <position position="45"/>
    </location>
    <ligand>
        <name>Zn(2+)</name>
        <dbReference type="ChEBI" id="CHEBI:29105"/>
    </ligand>
</feature>
<feature type="binding site" evidence="1">
    <location>
        <position position="49"/>
    </location>
    <ligand>
        <name>Zn(2+)</name>
        <dbReference type="ChEBI" id="CHEBI:29105"/>
    </ligand>
</feature>
<feature type="binding site" evidence="1">
    <location>
        <position position="153"/>
    </location>
    <ligand>
        <name>Zn(2+)</name>
        <dbReference type="ChEBI" id="CHEBI:29105"/>
    </ligand>
</feature>
<feature type="binding site" evidence="1">
    <location>
        <position position="157"/>
    </location>
    <ligand>
        <name>Zn(2+)</name>
        <dbReference type="ChEBI" id="CHEBI:29105"/>
    </ligand>
</feature>
<reference key="1">
    <citation type="submission" date="2007-11" db="EMBL/GenBank/DDBJ databases">
        <authorList>
            <consortium name="The Salmonella enterica serovar Arizonae Genome Sequencing Project"/>
            <person name="McClelland M."/>
            <person name="Sanderson E.K."/>
            <person name="Porwollik S."/>
            <person name="Spieth J."/>
            <person name="Clifton W.S."/>
            <person name="Fulton R."/>
            <person name="Chunyan W."/>
            <person name="Wollam A."/>
            <person name="Shah N."/>
            <person name="Pepin K."/>
            <person name="Bhonagiri V."/>
            <person name="Nash W."/>
            <person name="Johnson M."/>
            <person name="Thiruvilangam P."/>
            <person name="Wilson R."/>
        </authorList>
    </citation>
    <scope>NUCLEOTIDE SEQUENCE [LARGE SCALE GENOMIC DNA]</scope>
    <source>
        <strain>ATCC BAA-731 / CDC346-86 / RSK2980</strain>
    </source>
</reference>
<gene>
    <name evidence="1" type="primary">fieF</name>
    <name type="ordered locus">SARI_03582</name>
</gene>
<organism>
    <name type="scientific">Salmonella arizonae (strain ATCC BAA-731 / CDC346-86 / RSK2980)</name>
    <dbReference type="NCBI Taxonomy" id="41514"/>
    <lineage>
        <taxon>Bacteria</taxon>
        <taxon>Pseudomonadati</taxon>
        <taxon>Pseudomonadota</taxon>
        <taxon>Gammaproteobacteria</taxon>
        <taxon>Enterobacterales</taxon>
        <taxon>Enterobacteriaceae</taxon>
        <taxon>Salmonella</taxon>
    </lineage>
</organism>
<evidence type="ECO:0000255" key="1">
    <source>
        <dbReference type="HAMAP-Rule" id="MF_01425"/>
    </source>
</evidence>
<dbReference type="EMBL" id="CP000880">
    <property type="protein sequence ID" value="ABX23397.1"/>
    <property type="molecule type" value="Genomic_DNA"/>
</dbReference>
<dbReference type="SMR" id="A9MI51"/>
<dbReference type="STRING" id="41514.SARI_03582"/>
<dbReference type="KEGG" id="ses:SARI_03582"/>
<dbReference type="HOGENOM" id="CLU_013430_3_0_6"/>
<dbReference type="Proteomes" id="UP000002084">
    <property type="component" value="Chromosome"/>
</dbReference>
<dbReference type="GO" id="GO:0005886">
    <property type="term" value="C:plasma membrane"/>
    <property type="evidence" value="ECO:0007669"/>
    <property type="project" value="UniProtKB-SubCell"/>
</dbReference>
<dbReference type="GO" id="GO:0015086">
    <property type="term" value="F:cadmium ion transmembrane transporter activity"/>
    <property type="evidence" value="ECO:0007669"/>
    <property type="project" value="UniProtKB-UniRule"/>
</dbReference>
<dbReference type="GO" id="GO:0015093">
    <property type="term" value="F:ferrous iron transmembrane transporter activity"/>
    <property type="evidence" value="ECO:0007669"/>
    <property type="project" value="TreeGrafter"/>
</dbReference>
<dbReference type="GO" id="GO:0046872">
    <property type="term" value="F:metal ion binding"/>
    <property type="evidence" value="ECO:0007669"/>
    <property type="project" value="UniProtKB-KW"/>
</dbReference>
<dbReference type="GO" id="GO:0015341">
    <property type="term" value="F:zinc efflux antiporter activity"/>
    <property type="evidence" value="ECO:0007669"/>
    <property type="project" value="TreeGrafter"/>
</dbReference>
<dbReference type="GO" id="GO:0006882">
    <property type="term" value="P:intracellular zinc ion homeostasis"/>
    <property type="evidence" value="ECO:0007669"/>
    <property type="project" value="TreeGrafter"/>
</dbReference>
<dbReference type="FunFam" id="1.20.1510.10:FF:000001">
    <property type="entry name" value="Ferrous-iron efflux pump FieF"/>
    <property type="match status" value="1"/>
</dbReference>
<dbReference type="FunFam" id="3.30.70.1350:FF:000002">
    <property type="entry name" value="Ferrous-iron efflux pump FieF"/>
    <property type="match status" value="1"/>
</dbReference>
<dbReference type="Gene3D" id="1.20.1510.10">
    <property type="entry name" value="Cation efflux protein transmembrane domain"/>
    <property type="match status" value="1"/>
</dbReference>
<dbReference type="Gene3D" id="3.30.70.1350">
    <property type="entry name" value="Cation efflux protein, cytoplasmic domain"/>
    <property type="match status" value="1"/>
</dbReference>
<dbReference type="HAMAP" id="MF_01425">
    <property type="entry name" value="Cation_efflux_FieF"/>
    <property type="match status" value="1"/>
</dbReference>
<dbReference type="InterPro" id="IPR002524">
    <property type="entry name" value="Cation_efflux"/>
</dbReference>
<dbReference type="InterPro" id="IPR027470">
    <property type="entry name" value="Cation_efflux_CTD"/>
</dbReference>
<dbReference type="InterPro" id="IPR036837">
    <property type="entry name" value="Cation_efflux_CTD_sf"/>
</dbReference>
<dbReference type="InterPro" id="IPR023783">
    <property type="entry name" value="Cation_efflux_FieF"/>
</dbReference>
<dbReference type="InterPro" id="IPR027469">
    <property type="entry name" value="Cation_efflux_TMD_sf"/>
</dbReference>
<dbReference type="InterPro" id="IPR050291">
    <property type="entry name" value="CDF_Transporter"/>
</dbReference>
<dbReference type="NCBIfam" id="TIGR01297">
    <property type="entry name" value="CDF"/>
    <property type="match status" value="1"/>
</dbReference>
<dbReference type="NCBIfam" id="NF007064">
    <property type="entry name" value="PRK09509.1"/>
    <property type="match status" value="1"/>
</dbReference>
<dbReference type="PANTHER" id="PTHR43840:SF41">
    <property type="entry name" value="CATION-EFFLUX PUMP FIEF"/>
    <property type="match status" value="1"/>
</dbReference>
<dbReference type="PANTHER" id="PTHR43840">
    <property type="entry name" value="MITOCHONDRIAL METAL TRANSPORTER 1-RELATED"/>
    <property type="match status" value="1"/>
</dbReference>
<dbReference type="Pfam" id="PF01545">
    <property type="entry name" value="Cation_efflux"/>
    <property type="match status" value="1"/>
</dbReference>
<dbReference type="Pfam" id="PF16916">
    <property type="entry name" value="ZT_dimer"/>
    <property type="match status" value="1"/>
</dbReference>
<dbReference type="SUPFAM" id="SSF160240">
    <property type="entry name" value="Cation efflux protein cytoplasmic domain-like"/>
    <property type="match status" value="1"/>
</dbReference>
<dbReference type="SUPFAM" id="SSF161111">
    <property type="entry name" value="Cation efflux protein transmembrane domain-like"/>
    <property type="match status" value="1"/>
</dbReference>
<protein>
    <recommendedName>
        <fullName evidence="1">Cation-efflux pump FieF</fullName>
    </recommendedName>
</protein>
<comment type="function">
    <text evidence="1">Divalent metal cation transporter which exports Zn(2+), Cd(2+) and possibly Fe(2+). May be involved in zinc and iron detoxification by efflux.</text>
</comment>
<comment type="catalytic activity">
    <reaction evidence="1">
        <text>Zn(2+)(in) + H(+)(out) = Zn(2+)(out) + H(+)(in)</text>
        <dbReference type="Rhea" id="RHEA:28839"/>
        <dbReference type="ChEBI" id="CHEBI:15378"/>
        <dbReference type="ChEBI" id="CHEBI:29105"/>
    </reaction>
</comment>
<comment type="catalytic activity">
    <reaction evidence="1">
        <text>Cd(2+)(in) + H(+)(out) = Cd(2+)(out) + H(+)(in)</text>
        <dbReference type="Rhea" id="RHEA:28739"/>
        <dbReference type="ChEBI" id="CHEBI:15378"/>
        <dbReference type="ChEBI" id="CHEBI:48775"/>
    </reaction>
</comment>
<comment type="catalytic activity">
    <reaction evidence="1">
        <text>Fe(2+)(in) + H(+)(out) = Fe(2+)(out) + H(+)(in)</text>
        <dbReference type="Rhea" id="RHEA:29439"/>
        <dbReference type="ChEBI" id="CHEBI:15378"/>
        <dbReference type="ChEBI" id="CHEBI:29033"/>
    </reaction>
</comment>
<comment type="subunit">
    <text evidence="1">Homodimer.</text>
</comment>
<comment type="subcellular location">
    <subcellularLocation>
        <location evidence="1">Cell inner membrane</location>
        <topology evidence="1">Multi-pass membrane protein</topology>
    </subcellularLocation>
</comment>
<comment type="similarity">
    <text evidence="1">Belongs to the cation diffusion facilitator (CDF) transporter (TC 2.A.4) family. FieF subfamily.</text>
</comment>
<name>FIEF_SALAR</name>
<accession>A9MI51</accession>